<proteinExistence type="inferred from homology"/>
<feature type="chain" id="PRO_0000292836" description="sn-glycerol-3-phosphate transport system permease protein UgpA">
    <location>
        <begin position="1"/>
        <end position="295"/>
    </location>
</feature>
<feature type="topological domain" description="Cytoplasmic" evidence="2">
    <location>
        <begin position="1"/>
        <end position="11"/>
    </location>
</feature>
<feature type="transmembrane region" description="Helical" evidence="3">
    <location>
        <begin position="12"/>
        <end position="32"/>
    </location>
</feature>
<feature type="topological domain" description="Periplasmic" evidence="2">
    <location>
        <begin position="33"/>
        <end position="80"/>
    </location>
</feature>
<feature type="transmembrane region" description="Helical" evidence="3">
    <location>
        <begin position="81"/>
        <end position="101"/>
    </location>
</feature>
<feature type="topological domain" description="Cytoplasmic" evidence="2">
    <location>
        <begin position="102"/>
        <end position="109"/>
    </location>
</feature>
<feature type="transmembrane region" description="Helical" evidence="3">
    <location>
        <begin position="110"/>
        <end position="130"/>
    </location>
</feature>
<feature type="topological domain" description="Periplasmic" evidence="2">
    <location>
        <begin position="131"/>
        <end position="157"/>
    </location>
</feature>
<feature type="transmembrane region" description="Helical" evidence="3">
    <location>
        <begin position="158"/>
        <end position="178"/>
    </location>
</feature>
<feature type="topological domain" description="Cytoplasmic" evidence="2">
    <location>
        <begin position="179"/>
        <end position="207"/>
    </location>
</feature>
<feature type="transmembrane region" description="Helical" evidence="3">
    <location>
        <begin position="208"/>
        <end position="228"/>
    </location>
</feature>
<feature type="topological domain" description="Periplasmic" evidence="2">
    <location>
        <begin position="229"/>
        <end position="262"/>
    </location>
</feature>
<feature type="transmembrane region" description="Helical" evidence="3">
    <location>
        <begin position="263"/>
        <end position="283"/>
    </location>
</feature>
<feature type="topological domain" description="Cytoplasmic" evidence="2">
    <location>
        <begin position="284"/>
        <end position="295"/>
    </location>
</feature>
<feature type="domain" description="ABC transmembrane type-1" evidence="3">
    <location>
        <begin position="72"/>
        <end position="284"/>
    </location>
</feature>
<protein>
    <recommendedName>
        <fullName evidence="1">sn-glycerol-3-phosphate transport system permease protein UgpA</fullName>
    </recommendedName>
</protein>
<accession>Q7CKV6</accession>
<accession>Q74R30</accession>
<evidence type="ECO:0000250" key="1">
    <source>
        <dbReference type="UniProtKB" id="P10905"/>
    </source>
</evidence>
<evidence type="ECO:0000255" key="2"/>
<evidence type="ECO:0000255" key="3">
    <source>
        <dbReference type="PROSITE-ProRule" id="PRU00441"/>
    </source>
</evidence>
<evidence type="ECO:0000305" key="4"/>
<sequence length="295" mass="32503">MSPSRPGFSCSWLPYLLVLPQLAITAIFFLWPAGEALWYSVQTLDPFGLSSEFVGLSNFIQLFQDEYYLASFYTTLIFSALVAGIGLIVSLFLAAMVNYVLRGSRLYQTLLILPYAVAPAVAAVLWIFLFDPGLGLITHALAKLGYSWNHAQNSGQAMFLVVLASVWKQISYNFLFFLAALQSIPKSLVEAAAIDGAGPVRRFFNLVLPLISPVSFFLLVVNLVYAFFDTFPVIDAATGGGPVQATTTLIYKIYREGFAGLDLSSSAAQSVILMLLVIGLTVIQFRFVERKVRYQ</sequence>
<keyword id="KW-0997">Cell inner membrane</keyword>
<keyword id="KW-1003">Cell membrane</keyword>
<keyword id="KW-0472">Membrane</keyword>
<keyword id="KW-1185">Reference proteome</keyword>
<keyword id="KW-0812">Transmembrane</keyword>
<keyword id="KW-1133">Transmembrane helix</keyword>
<keyword id="KW-0813">Transport</keyword>
<name>UGPA_YERPE</name>
<dbReference type="EMBL" id="AE009952">
    <property type="protein sequence ID" value="AAM84024.1"/>
    <property type="molecule type" value="Genomic_DNA"/>
</dbReference>
<dbReference type="EMBL" id="AE017042">
    <property type="protein sequence ID" value="AAS63422.1"/>
    <property type="molecule type" value="Genomic_DNA"/>
</dbReference>
<dbReference type="EMBL" id="AL590842">
    <property type="protein sequence ID" value="CAL22381.1"/>
    <property type="molecule type" value="Genomic_DNA"/>
</dbReference>
<dbReference type="PIR" id="AB0462">
    <property type="entry name" value="AB0462"/>
</dbReference>
<dbReference type="RefSeq" id="WP_002211521.1">
    <property type="nucleotide sequence ID" value="NZ_WUCM01000048.1"/>
</dbReference>
<dbReference type="RefSeq" id="YP_002348672.1">
    <property type="nucleotide sequence ID" value="NC_003143.1"/>
</dbReference>
<dbReference type="SMR" id="Q7CKV6"/>
<dbReference type="IntAct" id="Q7CKV6">
    <property type="interactions" value="1"/>
</dbReference>
<dbReference type="STRING" id="214092.YPO3795"/>
<dbReference type="PaxDb" id="214092-YPO3795"/>
<dbReference type="DNASU" id="1145382"/>
<dbReference type="EnsemblBacteria" id="AAS63422">
    <property type="protein sequence ID" value="AAS63422"/>
    <property type="gene ID" value="YP_3254"/>
</dbReference>
<dbReference type="GeneID" id="57974913"/>
<dbReference type="KEGG" id="ype:YPO3795"/>
<dbReference type="KEGG" id="ypk:y0435"/>
<dbReference type="KEGG" id="ypm:YP_3254"/>
<dbReference type="PATRIC" id="fig|1028802.3.peg.1404"/>
<dbReference type="eggNOG" id="COG1175">
    <property type="taxonomic scope" value="Bacteria"/>
</dbReference>
<dbReference type="HOGENOM" id="CLU_016047_0_2_6"/>
<dbReference type="OMA" id="LWYSVQS"/>
<dbReference type="OrthoDB" id="9785347at2"/>
<dbReference type="Proteomes" id="UP000000815">
    <property type="component" value="Chromosome"/>
</dbReference>
<dbReference type="Proteomes" id="UP000001019">
    <property type="component" value="Chromosome"/>
</dbReference>
<dbReference type="Proteomes" id="UP000002490">
    <property type="component" value="Chromosome"/>
</dbReference>
<dbReference type="GO" id="GO:0005886">
    <property type="term" value="C:plasma membrane"/>
    <property type="evidence" value="ECO:0007669"/>
    <property type="project" value="UniProtKB-SubCell"/>
</dbReference>
<dbReference type="GO" id="GO:0055085">
    <property type="term" value="P:transmembrane transport"/>
    <property type="evidence" value="ECO:0007669"/>
    <property type="project" value="InterPro"/>
</dbReference>
<dbReference type="CDD" id="cd06261">
    <property type="entry name" value="TM_PBP2"/>
    <property type="match status" value="1"/>
</dbReference>
<dbReference type="FunFam" id="1.10.3720.10:FF:000028">
    <property type="entry name" value="sn-glycerol-3-phosphate ABC transporter permease UgpA"/>
    <property type="match status" value="1"/>
</dbReference>
<dbReference type="Gene3D" id="1.10.3720.10">
    <property type="entry name" value="MetI-like"/>
    <property type="match status" value="1"/>
</dbReference>
<dbReference type="InterPro" id="IPR000515">
    <property type="entry name" value="MetI-like"/>
</dbReference>
<dbReference type="InterPro" id="IPR035906">
    <property type="entry name" value="MetI-like_sf"/>
</dbReference>
<dbReference type="InterPro" id="IPR050809">
    <property type="entry name" value="UgpAE/MalFG_permease"/>
</dbReference>
<dbReference type="NCBIfam" id="NF007852">
    <property type="entry name" value="PRK10561.1"/>
    <property type="match status" value="1"/>
</dbReference>
<dbReference type="PANTHER" id="PTHR43227">
    <property type="entry name" value="BLL4140 PROTEIN"/>
    <property type="match status" value="1"/>
</dbReference>
<dbReference type="PANTHER" id="PTHR43227:SF9">
    <property type="entry name" value="SN-GLYCEROL-3-PHOSPHATE TRANSPORT SYSTEM PERMEASE PROTEIN UGPA"/>
    <property type="match status" value="1"/>
</dbReference>
<dbReference type="Pfam" id="PF00528">
    <property type="entry name" value="BPD_transp_1"/>
    <property type="match status" value="1"/>
</dbReference>
<dbReference type="SUPFAM" id="SSF161098">
    <property type="entry name" value="MetI-like"/>
    <property type="match status" value="1"/>
</dbReference>
<dbReference type="PROSITE" id="PS50928">
    <property type="entry name" value="ABC_TM1"/>
    <property type="match status" value="1"/>
</dbReference>
<comment type="function">
    <text evidence="1">Part of the ABC transporter complex UgpBAEC involved in sn-glycerol-3-phosphate (G3P) import. Probably responsible for the translocation of the substrate across the membrane.</text>
</comment>
<comment type="subunit">
    <text evidence="1">The complex is composed of two ATP-binding proteins (UgpC), two transmembrane proteins (UgpA and UgpE) and a solute-binding protein (UgpB).</text>
</comment>
<comment type="subcellular location">
    <subcellularLocation>
        <location evidence="1">Cell inner membrane</location>
        <topology evidence="2">Multi-pass membrane protein</topology>
    </subcellularLocation>
</comment>
<comment type="similarity">
    <text evidence="4">Belongs to the binding-protein-dependent transport system permease family. UgpAE subfamily.</text>
</comment>
<organism>
    <name type="scientific">Yersinia pestis</name>
    <dbReference type="NCBI Taxonomy" id="632"/>
    <lineage>
        <taxon>Bacteria</taxon>
        <taxon>Pseudomonadati</taxon>
        <taxon>Pseudomonadota</taxon>
        <taxon>Gammaproteobacteria</taxon>
        <taxon>Enterobacterales</taxon>
        <taxon>Yersiniaceae</taxon>
        <taxon>Yersinia</taxon>
    </lineage>
</organism>
<reference key="1">
    <citation type="journal article" date="2002" name="J. Bacteriol.">
        <title>Genome sequence of Yersinia pestis KIM.</title>
        <authorList>
            <person name="Deng W."/>
            <person name="Burland V."/>
            <person name="Plunkett G. III"/>
            <person name="Boutin A."/>
            <person name="Mayhew G.F."/>
            <person name="Liss P."/>
            <person name="Perna N.T."/>
            <person name="Rose D.J."/>
            <person name="Mau B."/>
            <person name="Zhou S."/>
            <person name="Schwartz D.C."/>
            <person name="Fetherston J.D."/>
            <person name="Lindler L.E."/>
            <person name="Brubaker R.R."/>
            <person name="Plano G.V."/>
            <person name="Straley S.C."/>
            <person name="McDonough K.A."/>
            <person name="Nilles M.L."/>
            <person name="Matson J.S."/>
            <person name="Blattner F.R."/>
            <person name="Perry R.D."/>
        </authorList>
    </citation>
    <scope>NUCLEOTIDE SEQUENCE [LARGE SCALE GENOMIC DNA]</scope>
    <source>
        <strain>KIM10+ / Biovar Mediaevalis</strain>
    </source>
</reference>
<reference key="2">
    <citation type="journal article" date="2001" name="Nature">
        <title>Genome sequence of Yersinia pestis, the causative agent of plague.</title>
        <authorList>
            <person name="Parkhill J."/>
            <person name="Wren B.W."/>
            <person name="Thomson N.R."/>
            <person name="Titball R.W."/>
            <person name="Holden M.T.G."/>
            <person name="Prentice M.B."/>
            <person name="Sebaihia M."/>
            <person name="James K.D."/>
            <person name="Churcher C.M."/>
            <person name="Mungall K.L."/>
            <person name="Baker S."/>
            <person name="Basham D."/>
            <person name="Bentley S.D."/>
            <person name="Brooks K."/>
            <person name="Cerdeno-Tarraga A.-M."/>
            <person name="Chillingworth T."/>
            <person name="Cronin A."/>
            <person name="Davies R.M."/>
            <person name="Davis P."/>
            <person name="Dougan G."/>
            <person name="Feltwell T."/>
            <person name="Hamlin N."/>
            <person name="Holroyd S."/>
            <person name="Jagels K."/>
            <person name="Karlyshev A.V."/>
            <person name="Leather S."/>
            <person name="Moule S."/>
            <person name="Oyston P.C.F."/>
            <person name="Quail M.A."/>
            <person name="Rutherford K.M."/>
            <person name="Simmonds M."/>
            <person name="Skelton J."/>
            <person name="Stevens K."/>
            <person name="Whitehead S."/>
            <person name="Barrell B.G."/>
        </authorList>
    </citation>
    <scope>NUCLEOTIDE SEQUENCE [LARGE SCALE GENOMIC DNA]</scope>
    <source>
        <strain>CO-92 / Biovar Orientalis</strain>
    </source>
</reference>
<reference key="3">
    <citation type="journal article" date="2004" name="DNA Res.">
        <title>Complete genome sequence of Yersinia pestis strain 91001, an isolate avirulent to humans.</title>
        <authorList>
            <person name="Song Y."/>
            <person name="Tong Z."/>
            <person name="Wang J."/>
            <person name="Wang L."/>
            <person name="Guo Z."/>
            <person name="Han Y."/>
            <person name="Zhang J."/>
            <person name="Pei D."/>
            <person name="Zhou D."/>
            <person name="Qin H."/>
            <person name="Pang X."/>
            <person name="Han Y."/>
            <person name="Zhai J."/>
            <person name="Li M."/>
            <person name="Cui B."/>
            <person name="Qi Z."/>
            <person name="Jin L."/>
            <person name="Dai R."/>
            <person name="Chen F."/>
            <person name="Li S."/>
            <person name="Ye C."/>
            <person name="Du Z."/>
            <person name="Lin W."/>
            <person name="Wang J."/>
            <person name="Yu J."/>
            <person name="Yang H."/>
            <person name="Wang J."/>
            <person name="Huang P."/>
            <person name="Yang R."/>
        </authorList>
    </citation>
    <scope>NUCLEOTIDE SEQUENCE [LARGE SCALE GENOMIC DNA]</scope>
    <source>
        <strain>91001 / Biovar Mediaevalis</strain>
    </source>
</reference>
<gene>
    <name type="primary">ugpA</name>
    <name type="ordered locus">YPO3795</name>
    <name type="ordered locus">y0435</name>
    <name type="ordered locus">YP_3254</name>
</gene>